<comment type="function">
    <text evidence="1">Catalyzes the methylation of glycine by using S-adenosylmethionine (AdoMet) to form N-methylglycine (sarcosine) with the concomitant production of S-adenosylhomocysteine (AdoHcy), a reaction regulated by the binding of 5-methyltetrahydrofolate. Possible crucial role in the regulation of tissue concentration of AdoMet and of metabolism of methionine.</text>
</comment>
<comment type="catalytic activity">
    <reaction evidence="4 8">
        <text>glycine + S-adenosyl-L-methionine = sarcosine + S-adenosyl-L-homocysteine + H(+)</text>
        <dbReference type="Rhea" id="RHEA:19937"/>
        <dbReference type="ChEBI" id="CHEBI:15378"/>
        <dbReference type="ChEBI" id="CHEBI:57305"/>
        <dbReference type="ChEBI" id="CHEBI:57433"/>
        <dbReference type="ChEBI" id="CHEBI:57856"/>
        <dbReference type="ChEBI" id="CHEBI:59789"/>
        <dbReference type="EC" id="2.1.1.20"/>
    </reaction>
    <physiologicalReaction direction="left-to-right" evidence="12">
        <dbReference type="Rhea" id="RHEA:19938"/>
    </physiologicalReaction>
</comment>
<comment type="activity regulation">
    <text evidence="5 6 8">Inhibited by 5-methyltetrahydrofolate monoglutamate and by 5-methyltetrahydrofolate pentaglutamate, inhibition is much more effective by the pentaglutamate form than by the monoglutamate form (PubMed:3838667). Two molecules of 5-methyltetrahydrofolate are bound per tetramer. The binding sites are localized between subunits. Inhibitor binding may preclude movements of the polypeptide chain that are necessary for enzyme activity.</text>
</comment>
<comment type="biophysicochemical properties">
    <kinetics>
        <KM evidence="4">36 uM for S-adenosyl-L-methionine</KM>
        <KM evidence="4">0.43 uM for glycine</KM>
    </kinetics>
</comment>
<comment type="subunit">
    <text evidence="5 6">Homotetramer.</text>
</comment>
<comment type="subcellular location">
    <subcellularLocation>
        <location evidence="9">Cytoplasm</location>
    </subcellularLocation>
</comment>
<comment type="tissue specificity">
    <text>Abundant in liver.</text>
</comment>
<comment type="similarity">
    <text evidence="3">Belongs to the class I-like SAM-binding methyltransferase superfamily. Glycine N-methyltransferase family.</text>
</comment>
<sequence length="293" mass="32549">MVDSVYRTRSLGVAAEGIPDQYADGEAARVWQLYIGDTRSRTAEYKAWLLGLLRQHGCHRVLDVACGTGVDSIMLVEEGFSVTSVDASDKMLKYALKERWNRRKEPAFDKWVIEEANWLTLDKDVPAGDGFDAVICLGNSFAHLPDSKGDQSEHRLALKNIASMVRPGGLLVIDHRNYDYILSTGCAPPGKNIYYKSDLTKDITTSVLTVNNKAHMVTLDYTVQVPGAGRDGAPGFSKFRLSYYPHCLASFTELVQEAFGGRCQHSVLGDFKPYRPGQAYVPCYFIHVLKKTG</sequence>
<proteinExistence type="evidence at protein level"/>
<organism>
    <name type="scientific">Rattus norvegicus</name>
    <name type="common">Rat</name>
    <dbReference type="NCBI Taxonomy" id="10116"/>
    <lineage>
        <taxon>Eukaryota</taxon>
        <taxon>Metazoa</taxon>
        <taxon>Chordata</taxon>
        <taxon>Craniata</taxon>
        <taxon>Vertebrata</taxon>
        <taxon>Euteleostomi</taxon>
        <taxon>Mammalia</taxon>
        <taxon>Eutheria</taxon>
        <taxon>Euarchontoglires</taxon>
        <taxon>Glires</taxon>
        <taxon>Rodentia</taxon>
        <taxon>Myomorpha</taxon>
        <taxon>Muroidea</taxon>
        <taxon>Muridae</taxon>
        <taxon>Murinae</taxon>
        <taxon>Rattus</taxon>
    </lineage>
</organism>
<evidence type="ECO:0000250" key="1">
    <source>
        <dbReference type="UniProtKB" id="Q14749"/>
    </source>
</evidence>
<evidence type="ECO:0000250" key="2">
    <source>
        <dbReference type="UniProtKB" id="Q9QXF8"/>
    </source>
</evidence>
<evidence type="ECO:0000255" key="3">
    <source>
        <dbReference type="PROSITE-ProRule" id="PRU00932"/>
    </source>
</evidence>
<evidence type="ECO:0000269" key="4">
    <source>
    </source>
</evidence>
<evidence type="ECO:0000269" key="5">
    <source>
    </source>
</evidence>
<evidence type="ECO:0000269" key="6">
    <source>
    </source>
</evidence>
<evidence type="ECO:0000269" key="7">
    <source>
    </source>
</evidence>
<evidence type="ECO:0000269" key="8">
    <source>
    </source>
</evidence>
<evidence type="ECO:0000269" key="9">
    <source>
    </source>
</evidence>
<evidence type="ECO:0000269" key="10">
    <source>
    </source>
</evidence>
<evidence type="ECO:0000303" key="11">
    <source>
    </source>
</evidence>
<evidence type="ECO:0000305" key="12">
    <source>
    </source>
</evidence>
<evidence type="ECO:0000312" key="13">
    <source>
        <dbReference type="PDB" id="1XVA"/>
    </source>
</evidence>
<evidence type="ECO:0000312" key="14">
    <source>
        <dbReference type="PDB" id="2IDK"/>
    </source>
</evidence>
<evidence type="ECO:0000312" key="15">
    <source>
        <dbReference type="PDB" id="3THR"/>
    </source>
</evidence>
<evidence type="ECO:0000312" key="16">
    <source>
        <dbReference type="PDB" id="3THS"/>
    </source>
</evidence>
<evidence type="ECO:0007744" key="17">
    <source>
        <dbReference type="PDB" id="1NBH"/>
    </source>
</evidence>
<evidence type="ECO:0007744" key="18">
    <source>
        <dbReference type="PDB" id="1NBI"/>
    </source>
</evidence>
<evidence type="ECO:0007744" key="19">
    <source>
        <dbReference type="PDB" id="1XVA"/>
    </source>
</evidence>
<evidence type="ECO:0007744" key="20">
    <source>
        <dbReference type="PDB" id="2IDJ"/>
    </source>
</evidence>
<evidence type="ECO:0007744" key="21">
    <source>
        <dbReference type="PDB" id="2IDK"/>
    </source>
</evidence>
<evidence type="ECO:0007744" key="22">
    <source>
        <dbReference type="PDB" id="3THR"/>
    </source>
</evidence>
<evidence type="ECO:0007744" key="23">
    <source>
        <dbReference type="PDB" id="3THS"/>
    </source>
</evidence>
<evidence type="ECO:0007829" key="24">
    <source>
        <dbReference type="PDB" id="1NBH"/>
    </source>
</evidence>
<evidence type="ECO:0007829" key="25">
    <source>
        <dbReference type="PDB" id="1XVA"/>
    </source>
</evidence>
<evidence type="ECO:0007829" key="26">
    <source>
        <dbReference type="PDB" id="2IDJ"/>
    </source>
</evidence>
<evidence type="ECO:0007829" key="27">
    <source>
        <dbReference type="PDB" id="3THR"/>
    </source>
</evidence>
<dbReference type="EC" id="2.1.1.20" evidence="4 8"/>
<dbReference type="EMBL" id="X06150">
    <property type="protein sequence ID" value="CAA29508.1"/>
    <property type="molecule type" value="mRNA"/>
</dbReference>
<dbReference type="EMBL" id="X07833">
    <property type="protein sequence ID" value="CAA30686.1"/>
    <property type="molecule type" value="Genomic_DNA"/>
</dbReference>
<dbReference type="PIR" id="S00112">
    <property type="entry name" value="S00112"/>
</dbReference>
<dbReference type="RefSeq" id="NP_058780.1">
    <property type="nucleotide sequence ID" value="NM_017084.1"/>
</dbReference>
<dbReference type="PDB" id="1BHJ">
    <property type="method" value="X-ray"/>
    <property type="resolution" value="2.50 A"/>
    <property type="chains" value="A/B=2-293"/>
</dbReference>
<dbReference type="PDB" id="1D2C">
    <property type="method" value="X-ray"/>
    <property type="resolution" value="2.50 A"/>
    <property type="chains" value="A/B=2-293"/>
</dbReference>
<dbReference type="PDB" id="1D2G">
    <property type="method" value="X-ray"/>
    <property type="resolution" value="2.50 A"/>
    <property type="chains" value="A/B=2-293"/>
</dbReference>
<dbReference type="PDB" id="1D2H">
    <property type="method" value="X-ray"/>
    <property type="resolution" value="3.00 A"/>
    <property type="chains" value="A/B/C/D=2-293"/>
</dbReference>
<dbReference type="PDB" id="1KIA">
    <property type="method" value="X-ray"/>
    <property type="resolution" value="2.80 A"/>
    <property type="chains" value="A/B/C/D=2-293"/>
</dbReference>
<dbReference type="PDB" id="1NBH">
    <property type="method" value="X-ray"/>
    <property type="resolution" value="2.80 A"/>
    <property type="chains" value="A/B/C/D=2-293"/>
</dbReference>
<dbReference type="PDB" id="1NBI">
    <property type="method" value="X-ray"/>
    <property type="resolution" value="3.00 A"/>
    <property type="chains" value="A/B/C/D=2-293"/>
</dbReference>
<dbReference type="PDB" id="1XVA">
    <property type="method" value="X-ray"/>
    <property type="resolution" value="2.20 A"/>
    <property type="chains" value="A/B=2-293"/>
</dbReference>
<dbReference type="PDB" id="2IDJ">
    <property type="method" value="X-ray"/>
    <property type="resolution" value="2.35 A"/>
    <property type="chains" value="A/B/C/D=2-293"/>
</dbReference>
<dbReference type="PDB" id="2IDK">
    <property type="method" value="X-ray"/>
    <property type="resolution" value="2.55 A"/>
    <property type="chains" value="A/B/C/D=2-293"/>
</dbReference>
<dbReference type="PDB" id="3THR">
    <property type="method" value="X-ray"/>
    <property type="resolution" value="2.00 A"/>
    <property type="chains" value="A/B/C/D=2-293"/>
</dbReference>
<dbReference type="PDB" id="3THS">
    <property type="method" value="X-ray"/>
    <property type="resolution" value="2.50 A"/>
    <property type="chains" value="A/B/C/D=2-293"/>
</dbReference>
<dbReference type="PDBsum" id="1BHJ"/>
<dbReference type="PDBsum" id="1D2C"/>
<dbReference type="PDBsum" id="1D2G"/>
<dbReference type="PDBsum" id="1D2H"/>
<dbReference type="PDBsum" id="1KIA"/>
<dbReference type="PDBsum" id="1NBH"/>
<dbReference type="PDBsum" id="1NBI"/>
<dbReference type="PDBsum" id="1XVA"/>
<dbReference type="PDBsum" id="2IDJ"/>
<dbReference type="PDBsum" id="2IDK"/>
<dbReference type="PDBsum" id="3THR"/>
<dbReference type="PDBsum" id="3THS"/>
<dbReference type="SMR" id="P13255"/>
<dbReference type="FunCoup" id="P13255">
    <property type="interactions" value="133"/>
</dbReference>
<dbReference type="STRING" id="10116.ENSRNOP00000022307"/>
<dbReference type="iPTMnet" id="P13255"/>
<dbReference type="PhosphoSitePlus" id="P13255"/>
<dbReference type="PaxDb" id="10116-ENSRNOP00000022307"/>
<dbReference type="Ensembl" id="ENSRNOT00000022307.5">
    <property type="protein sequence ID" value="ENSRNOP00000022307.2"/>
    <property type="gene ID" value="ENSRNOG00000016349.5"/>
</dbReference>
<dbReference type="GeneID" id="25134"/>
<dbReference type="KEGG" id="rno:25134"/>
<dbReference type="UCSC" id="RGD:2719">
    <property type="organism name" value="rat"/>
</dbReference>
<dbReference type="AGR" id="RGD:2719"/>
<dbReference type="CTD" id="27232"/>
<dbReference type="RGD" id="2719">
    <property type="gene designation" value="Gnmt"/>
</dbReference>
<dbReference type="eggNOG" id="ENOG502QRN6">
    <property type="taxonomic scope" value="Eukaryota"/>
</dbReference>
<dbReference type="GeneTree" id="ENSGT00390000006845"/>
<dbReference type="HOGENOM" id="CLU_069129_0_0_1"/>
<dbReference type="InParanoid" id="P13255"/>
<dbReference type="OrthoDB" id="15910at9989"/>
<dbReference type="PhylomeDB" id="P13255"/>
<dbReference type="TreeFam" id="TF324814"/>
<dbReference type="BRENDA" id="2.1.1.20">
    <property type="organism ID" value="5301"/>
</dbReference>
<dbReference type="Reactome" id="R-RNO-389661">
    <property type="pathway name" value="Glyoxylate metabolism and glycine degradation"/>
</dbReference>
<dbReference type="SABIO-RK" id="P13255"/>
<dbReference type="EvolutionaryTrace" id="P13255"/>
<dbReference type="PRO" id="PR:P13255"/>
<dbReference type="Proteomes" id="UP000002494">
    <property type="component" value="Chromosome 9"/>
</dbReference>
<dbReference type="Bgee" id="ENSRNOG00000016349">
    <property type="expression patterns" value="Expressed in liver and 8 other cell types or tissues"/>
</dbReference>
<dbReference type="GO" id="GO:0005829">
    <property type="term" value="C:cytosol"/>
    <property type="evidence" value="ECO:0000314"/>
    <property type="project" value="UniProtKB"/>
</dbReference>
<dbReference type="GO" id="GO:0034708">
    <property type="term" value="C:methyltransferase complex"/>
    <property type="evidence" value="ECO:0000315"/>
    <property type="project" value="CAFA"/>
</dbReference>
<dbReference type="GO" id="GO:0005542">
    <property type="term" value="F:folic acid binding"/>
    <property type="evidence" value="ECO:0000314"/>
    <property type="project" value="UniProtKB"/>
</dbReference>
<dbReference type="GO" id="GO:0016594">
    <property type="term" value="F:glycine binding"/>
    <property type="evidence" value="ECO:0000314"/>
    <property type="project" value="UniProtKB"/>
</dbReference>
<dbReference type="GO" id="GO:0017174">
    <property type="term" value="F:glycine N-methyltransferase activity"/>
    <property type="evidence" value="ECO:0000314"/>
    <property type="project" value="UniProtKB"/>
</dbReference>
<dbReference type="GO" id="GO:0042802">
    <property type="term" value="F:identical protein binding"/>
    <property type="evidence" value="ECO:0000353"/>
    <property type="project" value="CAFA"/>
</dbReference>
<dbReference type="GO" id="GO:1904047">
    <property type="term" value="F:S-adenosyl-L-methionine binding"/>
    <property type="evidence" value="ECO:0000315"/>
    <property type="project" value="CAFA"/>
</dbReference>
<dbReference type="GO" id="GO:0008757">
    <property type="term" value="F:S-adenosylmethionine-dependent methyltransferase activity"/>
    <property type="evidence" value="ECO:0000314"/>
    <property type="project" value="RGD"/>
</dbReference>
<dbReference type="GO" id="GO:0098603">
    <property type="term" value="F:selenol Se-methyltransferase activity"/>
    <property type="evidence" value="ECO:0000304"/>
    <property type="project" value="Reactome"/>
</dbReference>
<dbReference type="GO" id="GO:0006544">
    <property type="term" value="P:glycine metabolic process"/>
    <property type="evidence" value="ECO:0000315"/>
    <property type="project" value="CAFA"/>
</dbReference>
<dbReference type="GO" id="GO:0005977">
    <property type="term" value="P:glycogen metabolic process"/>
    <property type="evidence" value="ECO:0000266"/>
    <property type="project" value="RGD"/>
</dbReference>
<dbReference type="GO" id="GO:0006555">
    <property type="term" value="P:methionine metabolic process"/>
    <property type="evidence" value="ECO:0000266"/>
    <property type="project" value="RGD"/>
</dbReference>
<dbReference type="GO" id="GO:0032259">
    <property type="term" value="P:methylation"/>
    <property type="evidence" value="ECO:0007669"/>
    <property type="project" value="UniProtKB-KW"/>
</dbReference>
<dbReference type="GO" id="GO:0006730">
    <property type="term" value="P:one-carbon metabolic process"/>
    <property type="evidence" value="ECO:0000266"/>
    <property type="project" value="RGD"/>
</dbReference>
<dbReference type="GO" id="GO:0051289">
    <property type="term" value="P:protein homotetramerization"/>
    <property type="evidence" value="ECO:0000353"/>
    <property type="project" value="UniProtKB"/>
</dbReference>
<dbReference type="GO" id="GO:0006111">
    <property type="term" value="P:regulation of gluconeogenesis"/>
    <property type="evidence" value="ECO:0000266"/>
    <property type="project" value="RGD"/>
</dbReference>
<dbReference type="GO" id="GO:0046498">
    <property type="term" value="P:S-adenosylhomocysteine metabolic process"/>
    <property type="evidence" value="ECO:0000314"/>
    <property type="project" value="RGD"/>
</dbReference>
<dbReference type="GO" id="GO:0046500">
    <property type="term" value="P:S-adenosylmethionine metabolic process"/>
    <property type="evidence" value="ECO:0000314"/>
    <property type="project" value="UniProtKB"/>
</dbReference>
<dbReference type="GO" id="GO:1901052">
    <property type="term" value="P:sarcosine metabolic process"/>
    <property type="evidence" value="ECO:0000315"/>
    <property type="project" value="RGD"/>
</dbReference>
<dbReference type="CDD" id="cd02440">
    <property type="entry name" value="AdoMet_MTases"/>
    <property type="match status" value="1"/>
</dbReference>
<dbReference type="DisProt" id="DP00031"/>
<dbReference type="FunFam" id="3.30.46.10:FF:000001">
    <property type="entry name" value="Glycine N-methyltransferase"/>
    <property type="match status" value="1"/>
</dbReference>
<dbReference type="FunFam" id="3.40.50.150:FF:000113">
    <property type="entry name" value="Glycine N-methyltransferase"/>
    <property type="match status" value="1"/>
</dbReference>
<dbReference type="Gene3D" id="3.30.46.10">
    <property type="entry name" value="Glycine N-methyltransferase, chain A, domain 1"/>
    <property type="match status" value="1"/>
</dbReference>
<dbReference type="Gene3D" id="3.40.50.150">
    <property type="entry name" value="Vaccinia Virus protein VP39"/>
    <property type="match status" value="1"/>
</dbReference>
<dbReference type="InterPro" id="IPR014369">
    <property type="entry name" value="Gly/Sar_N_MeTrfase"/>
</dbReference>
<dbReference type="InterPro" id="IPR041698">
    <property type="entry name" value="Methyltransf_25"/>
</dbReference>
<dbReference type="InterPro" id="IPR029063">
    <property type="entry name" value="SAM-dependent_MTases_sf"/>
</dbReference>
<dbReference type="PANTHER" id="PTHR16458">
    <property type="entry name" value="GLYCINE N-METHYLTRANSFERASE"/>
    <property type="match status" value="1"/>
</dbReference>
<dbReference type="PANTHER" id="PTHR16458:SF2">
    <property type="entry name" value="GLYCINE N-METHYLTRANSFERASE"/>
    <property type="match status" value="1"/>
</dbReference>
<dbReference type="Pfam" id="PF13649">
    <property type="entry name" value="Methyltransf_25"/>
    <property type="match status" value="1"/>
</dbReference>
<dbReference type="PIRSF" id="PIRSF000385">
    <property type="entry name" value="Gly_N-mtase"/>
    <property type="match status" value="1"/>
</dbReference>
<dbReference type="SUPFAM" id="SSF53335">
    <property type="entry name" value="S-adenosyl-L-methionine-dependent methyltransferases"/>
    <property type="match status" value="1"/>
</dbReference>
<dbReference type="PROSITE" id="PS51600">
    <property type="entry name" value="SAM_GNMT"/>
    <property type="match status" value="1"/>
</dbReference>
<feature type="initiator methionine" description="Removed" evidence="7">
    <location>
        <position position="1"/>
    </location>
</feature>
<feature type="chain" id="PRO_0000087528" description="Glycine N-methyltransferase">
    <location>
        <begin position="2"/>
        <end position="293"/>
    </location>
</feature>
<feature type="binding site" evidence="6 15 16">
    <location>
        <position position="4"/>
    </location>
    <ligand>
        <name>(6S)-5-methyl-5,6,7,8-tetrahydrofolate</name>
        <dbReference type="ChEBI" id="CHEBI:18608"/>
        <label>1</label>
        <note>ligand shared between tetrameric partners</note>
    </ligand>
</feature>
<feature type="binding site" evidence="5 14">
    <location>
        <position position="6"/>
    </location>
    <ligand>
        <name>(6S)-5-methyl-5,6,7,8-tetrahydrofolate</name>
        <dbReference type="ChEBI" id="CHEBI:18608"/>
        <label>1</label>
        <note>ligand shared between tetrameric partners</note>
    </ligand>
</feature>
<feature type="binding site" evidence="6 16">
    <location>
        <position position="6"/>
    </location>
    <ligand>
        <name>(6S)-5-methyl-5,6,7,8-tetrahydrofolate</name>
        <dbReference type="ChEBI" id="CHEBI:18608"/>
        <label>2</label>
        <note>ligand shared between tetrameric partners</note>
    </ligand>
</feature>
<feature type="binding site" evidence="4 17">
    <location>
        <position position="22"/>
    </location>
    <ligand>
        <name>S-adenosyl-L-methionine</name>
        <dbReference type="ChEBI" id="CHEBI:59789"/>
    </ligand>
</feature>
<feature type="binding site" evidence="4 17 18">
    <location>
        <position position="31"/>
    </location>
    <ligand>
        <name>S-adenosyl-L-methionine</name>
        <dbReference type="ChEBI" id="CHEBI:59789"/>
    </ligand>
</feature>
<feature type="binding site" evidence="10 19">
    <location>
        <position position="34"/>
    </location>
    <ligand>
        <name>S-adenosyl-L-methionine</name>
        <dbReference type="ChEBI" id="CHEBI:59789"/>
    </ligand>
</feature>
<feature type="binding site" evidence="4 17 18">
    <location>
        <position position="41"/>
    </location>
    <ligand>
        <name>S-adenosyl-L-methionine</name>
        <dbReference type="ChEBI" id="CHEBI:59789"/>
    </ligand>
</feature>
<feature type="binding site" evidence="4 10 13 17 18">
    <location>
        <position position="65"/>
    </location>
    <ligand>
        <name>S-adenosyl-L-methionine</name>
        <dbReference type="ChEBI" id="CHEBI:59789"/>
    </ligand>
</feature>
<feature type="binding site" evidence="4 17 18">
    <location>
        <begin position="86"/>
        <end position="88"/>
    </location>
    <ligand>
        <name>S-adenosyl-L-methionine</name>
        <dbReference type="ChEBI" id="CHEBI:59789"/>
    </ligand>
</feature>
<feature type="binding site" evidence="4 17 18">
    <location>
        <begin position="117"/>
        <end position="118"/>
    </location>
    <ligand>
        <name>S-adenosyl-L-methionine</name>
        <dbReference type="ChEBI" id="CHEBI:59789"/>
    </ligand>
</feature>
<feature type="binding site" evidence="4 10 18 19">
    <location>
        <begin position="137"/>
        <end position="140"/>
    </location>
    <ligand>
        <name>S-adenosyl-L-methionine</name>
        <dbReference type="ChEBI" id="CHEBI:59789"/>
    </ligand>
</feature>
<feature type="binding site" evidence="10 19">
    <location>
        <position position="176"/>
    </location>
    <ligand>
        <name>S-adenosyl-L-methionine</name>
        <dbReference type="ChEBI" id="CHEBI:59789"/>
    </ligand>
</feature>
<feature type="binding site" evidence="6 15 16">
    <location>
        <position position="215"/>
    </location>
    <ligand>
        <name>(6S)-5-methyl-5,6,7,8-tetrahydrofolate</name>
        <dbReference type="ChEBI" id="CHEBI:18608"/>
        <label>2</label>
        <note>ligand shared between tetrameric partners</note>
    </ligand>
</feature>
<feature type="binding site" evidence="10 19">
    <location>
        <position position="221"/>
    </location>
    <ligand>
        <name>S-adenosyl-L-methionine</name>
        <dbReference type="ChEBI" id="CHEBI:59789"/>
    </ligand>
</feature>
<feature type="binding site" evidence="6 15 16">
    <location>
        <position position="240"/>
    </location>
    <ligand>
        <name>(6S)-5-methyl-5,6,7,8-tetrahydrofolate</name>
        <dbReference type="ChEBI" id="CHEBI:18608"/>
        <label>1</label>
        <note>ligand shared between tetrameric partners</note>
    </ligand>
</feature>
<feature type="binding site" evidence="6 15 16">
    <location>
        <position position="240"/>
    </location>
    <ligand>
        <name>(6S)-5-methyl-5,6,7,8-tetrahydrofolate</name>
        <dbReference type="ChEBI" id="CHEBI:18608"/>
        <label>2</label>
        <note>ligand shared between tetrameric partners</note>
    </ligand>
</feature>
<feature type="modified residue" description="N-acetylvaline" evidence="7">
    <location>
        <position position="2"/>
    </location>
</feature>
<feature type="modified residue" description="Phosphoserine" evidence="2">
    <location>
        <position position="10"/>
    </location>
</feature>
<feature type="modified residue" description="Phosphotyrosine" evidence="2">
    <location>
        <position position="34"/>
    </location>
</feature>
<feature type="modified residue" description="N6-succinyllysine" evidence="2">
    <location>
        <position position="46"/>
    </location>
</feature>
<feature type="modified residue" description="N6-succinyllysine" evidence="2">
    <location>
        <position position="191"/>
    </location>
</feature>
<feature type="modified residue" description="N6-succinyllysine" evidence="2">
    <location>
        <position position="196"/>
    </location>
</feature>
<feature type="modified residue" description="N6-succinyllysine" evidence="2">
    <location>
        <position position="201"/>
    </location>
</feature>
<feature type="mutagenesis site" description="Reduces affinity for glycine." evidence="4">
    <original>Y</original>
    <variation>F</variation>
    <location>
        <position position="34"/>
    </location>
</feature>
<feature type="mutagenesis site" description="Strongly reduced affinity for glycine." evidence="4">
    <original>R</original>
    <variation>K</variation>
    <location>
        <position position="176"/>
    </location>
</feature>
<feature type="mutagenesis site" description="Reduces affinity for glycine." evidence="4">
    <original>Y</original>
    <variation>F</variation>
    <location>
        <position position="221"/>
    </location>
</feature>
<feature type="strand" evidence="27">
    <location>
        <begin position="5"/>
        <end position="9"/>
    </location>
</feature>
<feature type="strand" evidence="24">
    <location>
        <begin position="11"/>
        <end position="13"/>
    </location>
</feature>
<feature type="turn" evidence="27">
    <location>
        <begin position="21"/>
        <end position="24"/>
    </location>
</feature>
<feature type="helix" evidence="27">
    <location>
        <begin position="26"/>
        <end position="35"/>
    </location>
</feature>
<feature type="strand" evidence="26">
    <location>
        <begin position="39"/>
        <end position="41"/>
    </location>
</feature>
<feature type="helix" evidence="27">
    <location>
        <begin position="43"/>
        <end position="55"/>
    </location>
</feature>
<feature type="strand" evidence="27">
    <location>
        <begin position="60"/>
        <end position="63"/>
    </location>
</feature>
<feature type="helix" evidence="27">
    <location>
        <begin position="70"/>
        <end position="77"/>
    </location>
</feature>
<feature type="strand" evidence="27">
    <location>
        <begin position="81"/>
        <end position="87"/>
    </location>
</feature>
<feature type="helix" evidence="27">
    <location>
        <begin position="89"/>
        <end position="101"/>
    </location>
</feature>
<feature type="turn" evidence="27">
    <location>
        <begin position="102"/>
        <end position="104"/>
    </location>
</feature>
<feature type="helix" evidence="27">
    <location>
        <begin position="106"/>
        <end position="109"/>
    </location>
</feature>
<feature type="strand" evidence="27">
    <location>
        <begin position="112"/>
        <end position="115"/>
    </location>
</feature>
<feature type="helix" evidence="27">
    <location>
        <begin position="118"/>
        <end position="120"/>
    </location>
</feature>
<feature type="helix" evidence="27">
    <location>
        <begin position="121"/>
        <end position="124"/>
    </location>
</feature>
<feature type="strand" evidence="27">
    <location>
        <begin position="131"/>
        <end position="136"/>
    </location>
</feature>
<feature type="turn" evidence="24">
    <location>
        <begin position="137"/>
        <end position="139"/>
    </location>
</feature>
<feature type="helix" evidence="27">
    <location>
        <begin position="141"/>
        <end position="143"/>
    </location>
</feature>
<feature type="strand" evidence="27">
    <location>
        <begin position="147"/>
        <end position="151"/>
    </location>
</feature>
<feature type="helix" evidence="27">
    <location>
        <begin position="152"/>
        <end position="163"/>
    </location>
</feature>
<feature type="strand" evidence="27">
    <location>
        <begin position="165"/>
        <end position="176"/>
    </location>
</feature>
<feature type="helix" evidence="27">
    <location>
        <begin position="178"/>
        <end position="184"/>
    </location>
</feature>
<feature type="strand" evidence="27">
    <location>
        <begin position="193"/>
        <end position="195"/>
    </location>
</feature>
<feature type="strand" evidence="27">
    <location>
        <begin position="202"/>
        <end position="210"/>
    </location>
</feature>
<feature type="strand" evidence="27">
    <location>
        <begin position="213"/>
        <end position="225"/>
    </location>
</feature>
<feature type="strand" evidence="25">
    <location>
        <begin position="229"/>
        <end position="232"/>
    </location>
</feature>
<feature type="strand" evidence="27">
    <location>
        <begin position="235"/>
        <end position="243"/>
    </location>
</feature>
<feature type="helix" evidence="27">
    <location>
        <begin position="248"/>
        <end position="257"/>
    </location>
</feature>
<feature type="turn" evidence="27">
    <location>
        <begin position="258"/>
        <end position="261"/>
    </location>
</feature>
<feature type="strand" evidence="27">
    <location>
        <begin position="263"/>
        <end position="269"/>
    </location>
</feature>
<feature type="strand" evidence="27">
    <location>
        <begin position="283"/>
        <end position="291"/>
    </location>
</feature>
<keyword id="KW-0002">3D-structure</keyword>
<keyword id="KW-0007">Acetylation</keyword>
<keyword id="KW-0963">Cytoplasm</keyword>
<keyword id="KW-0903">Direct protein sequencing</keyword>
<keyword id="KW-0290">Folate-binding</keyword>
<keyword id="KW-0489">Methyltransferase</keyword>
<keyword id="KW-0597">Phosphoprotein</keyword>
<keyword id="KW-1185">Reference proteome</keyword>
<keyword id="KW-0949">S-adenosyl-L-methionine</keyword>
<keyword id="KW-0808">Transferase</keyword>
<gene>
    <name type="primary">Gnmt</name>
    <name evidence="11" type="synonym">Fbp-cII</name>
</gene>
<protein>
    <recommendedName>
        <fullName>Glycine N-methyltransferase</fullName>
        <ecNumber evidence="4 8">2.1.1.20</ecNumber>
    </recommendedName>
    <alternativeName>
        <fullName evidence="11">Folate-binding protein</fullName>
    </alternativeName>
</protein>
<accession>P13255</accession>
<reference key="1">
    <citation type="journal article" date="1987" name="Eur. J. Biochem.">
        <title>Rat glycine methyltransferase. Complete amino acid sequence deduced from a cDNA clone and characterization of the genomic DNA.</title>
        <authorList>
            <person name="Ogawa H."/>
            <person name="Konishi K."/>
            <person name="Takata Y."/>
            <person name="Nakashima H."/>
            <person name="Fujioka M."/>
        </authorList>
    </citation>
    <scope>NUCLEOTIDE SEQUENCE [GENOMIC DNA / MRNA]</scope>
    <scope>PROTEIN SEQUENCE OF 2-7</scope>
    <scope>CLEAVAGE OF INITIATOR METHIONINE</scope>
    <scope>ACETYLATION AT VAL-2</scope>
    <source>
        <strain>Sprague-Dawley</strain>
    </source>
</reference>
<reference key="2">
    <citation type="journal article" date="1984" name="Proc. Natl. Acad. Sci. U.S.A.">
        <title>Glycine N-methyltransferase is a folate binding protein of rat liver cytosol.</title>
        <authorList>
            <person name="Cook R.J."/>
            <person name="Wagner C."/>
        </authorList>
    </citation>
    <scope>SUBCELLULAR LOCATION</scope>
    <scope>FOLATE BINDING</scope>
</reference>
<reference key="3">
    <citation type="journal article" date="1985" name="Biochem. Biophys. Res. Commun.">
        <title>Inhibition of glycine N-methyltransferase activity by folate derivatives: implications for regulation of methyl group metabolism.</title>
        <authorList>
            <person name="Wagner C."/>
            <person name="Briggs W.T."/>
            <person name="Cook R.J."/>
        </authorList>
    </citation>
    <scope>CATALYTIC ACTIVITY</scope>
    <scope>FUNCTION</scope>
    <scope>ACTIVITY REGULATION</scope>
    <scope>FOLATE BINDING</scope>
</reference>
<reference key="4">
    <citation type="journal article" date="1996" name="Biochemistry">
        <title>Crystal structure of glycine N-methyltransferase from rat liver.</title>
        <authorList>
            <person name="Fu Z."/>
            <person name="Hu Y."/>
            <person name="Konishi K."/>
            <person name="Takata Y."/>
            <person name="Ogawa H."/>
            <person name="Gomi T."/>
            <person name="Fujioka M."/>
            <person name="Takusagawa F."/>
        </authorList>
    </citation>
    <scope>X-RAY CRYSTALLOGRAPHY (2.2 ANGSTROMS) OF 2-293 IN COMPLEX WITH S-ADENOSYL-L-METHIONINE</scope>
    <source>
        <tissue>Liver</tissue>
    </source>
</reference>
<reference key="5">
    <citation type="journal article" date="1998" name="Protein Sci.">
        <title>Crystal structure of apo-glycine N-methyltransferase (GNMT).</title>
        <authorList>
            <person name="Pattanayek R."/>
            <person name="Newcomer M.E."/>
            <person name="Wagner C."/>
        </authorList>
    </citation>
    <scope>X-RAY CRYSTALLOGRAPHY (2.5 ANGSTROMS)</scope>
</reference>
<reference key="6">
    <citation type="journal article" date="2000" name="J. Mol. Biol.">
        <title>Mechanisms for auto-inhibition and forced product release in glycine N-methyltransferase: crystal structures of wild-type, mutant R175K and S-adenosylhomocysteine-bound R175K enzymes.</title>
        <authorList>
            <person name="Huang Y."/>
            <person name="Komoto J."/>
            <person name="Konishi K."/>
            <person name="Takata Y."/>
            <person name="Ogawa H."/>
            <person name="Gomi T."/>
            <person name="Fujioka M."/>
            <person name="Takusagawa F."/>
        </authorList>
    </citation>
    <scope>X-RAY CRYSTALLOGRAPHY (3.0 ANGSTROMS)</scope>
</reference>
<reference evidence="17 18" key="7">
    <citation type="journal article" date="2003" name="Biochemistry">
        <title>Catalytic mechanism of glycine N-methyltransferase.</title>
        <authorList>
            <person name="Takata Y."/>
            <person name="Huang Y."/>
            <person name="Komoto J."/>
            <person name="Yamada T."/>
            <person name="Konishi K."/>
            <person name="Ogawa H."/>
            <person name="Gomi T."/>
            <person name="Fujioka M."/>
            <person name="Takusagawa F."/>
        </authorList>
    </citation>
    <scope>X-RAY CRYSTALLOGRAPHY (2.8 ANGSTROMS) OF 2-292 IN COMPLEXES WITH S-ADENOSYL-L-METHIONINE AND ACETATE</scope>
    <scope>MUTAGENESIS OF TYR-34; ARG-176 AND TYR-221</scope>
    <scope>FUNCTION</scope>
    <scope>CATALYTIC ACTIVITY</scope>
    <scope>BIOPHYSICOCHEMICAL PROPERTIES</scope>
</reference>
<reference evidence="20 21" key="8">
    <citation type="journal article" date="2007" name="J. Biol. Chem.">
        <title>5-methyltetrahydrofolate is bound in intersubunit areas of rat liver folate-binding protein glycine N-methyltransferase.</title>
        <authorList>
            <person name="Luka Z."/>
            <person name="Pakhomova S."/>
            <person name="Loukachevitch L.V."/>
            <person name="Egli M."/>
            <person name="Newcomer M.E."/>
            <person name="Wagner C."/>
        </authorList>
    </citation>
    <scope>X-RAY CRYSTALLOGRAPHY (2.35 ANGSTROMS) OF 2-292 IN COMPLEX WITH 5-METHYLTETRAHYDROFOLATE</scope>
    <scope>ACTIVITY REGULATION</scope>
</reference>
<reference evidence="22 23" key="9">
    <citation type="journal article" date="2012" name="Biochim. Biophys. Acta">
        <title>Differences in folate-protein interactions result in differing inhibition of native rat liver and recombinant glycine N-methyltransferase by 5-methyltetrahydrofolate.</title>
        <authorList>
            <person name="Luka Z."/>
            <person name="Pakhomova S."/>
            <person name="Loukachevitch L.V."/>
            <person name="Newcomer M.E."/>
            <person name="Wagner C."/>
        </authorList>
    </citation>
    <scope>X-RAY CRYSTALLOGRAPHY (2.00 ANGSTROMS) OF 2-293 IN COMPLEXES WITH 5-METHYLTETRAHYDROFOLATE PENTAGLUTAMATE AND 5-METHYLTETRAHYDROFOLATE MONOGLUTAMATE</scope>
    <scope>SUBUNIT</scope>
</reference>
<name>GNMT_RAT</name>